<evidence type="ECO:0000255" key="1">
    <source>
        <dbReference type="HAMAP-Rule" id="MF_00368"/>
    </source>
</evidence>
<evidence type="ECO:0000305" key="2"/>
<sequence length="128" mass="13560">MATLTIDEIVEAIKNMSVLEVAELVKRLEEEFGVSAAAMVAAAPAAGAAAGAPAQAEEKTEFDVILKSPGKNKIQVIKVVREITGLGLKEAKELVDNAPKPIKEGVPKEEAEQIKKKLEEAGAEVELK</sequence>
<proteinExistence type="inferred from homology"/>
<gene>
    <name evidence="1" type="primary">rplL</name>
    <name type="ordered locus">aq_1937</name>
</gene>
<name>RL7_AQUAE</name>
<dbReference type="EMBL" id="AE000657">
    <property type="protein sequence ID" value="AAC07728.1"/>
    <property type="molecule type" value="Genomic_DNA"/>
</dbReference>
<dbReference type="PIR" id="E70466">
    <property type="entry name" value="E70466"/>
</dbReference>
<dbReference type="RefSeq" id="NP_214330.1">
    <property type="nucleotide sequence ID" value="NC_000918.1"/>
</dbReference>
<dbReference type="RefSeq" id="WP_010881266.1">
    <property type="nucleotide sequence ID" value="NC_000918.1"/>
</dbReference>
<dbReference type="SMR" id="P0A466"/>
<dbReference type="FunCoup" id="P0A466">
    <property type="interactions" value="502"/>
</dbReference>
<dbReference type="STRING" id="224324.aq_1937"/>
<dbReference type="EnsemblBacteria" id="AAC07728">
    <property type="protein sequence ID" value="AAC07728"/>
    <property type="gene ID" value="aq_1937"/>
</dbReference>
<dbReference type="KEGG" id="aae:aq_1937"/>
<dbReference type="PATRIC" id="fig|224324.8.peg.1500"/>
<dbReference type="eggNOG" id="COG0222">
    <property type="taxonomic scope" value="Bacteria"/>
</dbReference>
<dbReference type="HOGENOM" id="CLU_086499_3_2_0"/>
<dbReference type="InParanoid" id="P0A466"/>
<dbReference type="OrthoDB" id="9811748at2"/>
<dbReference type="Proteomes" id="UP000000798">
    <property type="component" value="Chromosome"/>
</dbReference>
<dbReference type="GO" id="GO:0022625">
    <property type="term" value="C:cytosolic large ribosomal subunit"/>
    <property type="evidence" value="ECO:0000318"/>
    <property type="project" value="GO_Central"/>
</dbReference>
<dbReference type="GO" id="GO:0003729">
    <property type="term" value="F:mRNA binding"/>
    <property type="evidence" value="ECO:0000318"/>
    <property type="project" value="GO_Central"/>
</dbReference>
<dbReference type="GO" id="GO:0003735">
    <property type="term" value="F:structural constituent of ribosome"/>
    <property type="evidence" value="ECO:0000318"/>
    <property type="project" value="GO_Central"/>
</dbReference>
<dbReference type="GO" id="GO:0006412">
    <property type="term" value="P:translation"/>
    <property type="evidence" value="ECO:0000318"/>
    <property type="project" value="GO_Central"/>
</dbReference>
<dbReference type="CDD" id="cd00387">
    <property type="entry name" value="Ribosomal_L7_L12"/>
    <property type="match status" value="1"/>
</dbReference>
<dbReference type="FunFam" id="1.20.5.710:FF:000008">
    <property type="entry name" value="50S ribosomal protein L7/L12"/>
    <property type="match status" value="1"/>
</dbReference>
<dbReference type="FunFam" id="3.30.1390.10:FF:000001">
    <property type="entry name" value="50S ribosomal protein L7/L12"/>
    <property type="match status" value="1"/>
</dbReference>
<dbReference type="Gene3D" id="3.30.1390.10">
    <property type="match status" value="1"/>
</dbReference>
<dbReference type="Gene3D" id="1.20.5.710">
    <property type="entry name" value="Single helix bin"/>
    <property type="match status" value="1"/>
</dbReference>
<dbReference type="HAMAP" id="MF_00368">
    <property type="entry name" value="Ribosomal_bL12"/>
    <property type="match status" value="1"/>
</dbReference>
<dbReference type="InterPro" id="IPR000206">
    <property type="entry name" value="Ribosomal_bL12"/>
</dbReference>
<dbReference type="InterPro" id="IPR013823">
    <property type="entry name" value="Ribosomal_bL12_C"/>
</dbReference>
<dbReference type="InterPro" id="IPR014719">
    <property type="entry name" value="Ribosomal_bL12_C/ClpS-like"/>
</dbReference>
<dbReference type="InterPro" id="IPR008932">
    <property type="entry name" value="Ribosomal_bL12_oligo"/>
</dbReference>
<dbReference type="InterPro" id="IPR036235">
    <property type="entry name" value="Ribosomal_bL12_oligo_N_sf"/>
</dbReference>
<dbReference type="NCBIfam" id="TIGR00855">
    <property type="entry name" value="L12"/>
    <property type="match status" value="1"/>
</dbReference>
<dbReference type="PANTHER" id="PTHR45987">
    <property type="entry name" value="39S RIBOSOMAL PROTEIN L12"/>
    <property type="match status" value="1"/>
</dbReference>
<dbReference type="PANTHER" id="PTHR45987:SF4">
    <property type="entry name" value="LARGE RIBOSOMAL SUBUNIT PROTEIN BL12M"/>
    <property type="match status" value="1"/>
</dbReference>
<dbReference type="Pfam" id="PF00542">
    <property type="entry name" value="Ribosomal_L12"/>
    <property type="match status" value="1"/>
</dbReference>
<dbReference type="Pfam" id="PF16320">
    <property type="entry name" value="Ribosomal_L12_N"/>
    <property type="match status" value="1"/>
</dbReference>
<dbReference type="SUPFAM" id="SSF54736">
    <property type="entry name" value="ClpS-like"/>
    <property type="match status" value="1"/>
</dbReference>
<dbReference type="SUPFAM" id="SSF48300">
    <property type="entry name" value="Ribosomal protein L7/12, oligomerisation (N-terminal) domain"/>
    <property type="match status" value="1"/>
</dbReference>
<organism>
    <name type="scientific">Aquifex aeolicus (strain VF5)</name>
    <dbReference type="NCBI Taxonomy" id="224324"/>
    <lineage>
        <taxon>Bacteria</taxon>
        <taxon>Pseudomonadati</taxon>
        <taxon>Aquificota</taxon>
        <taxon>Aquificia</taxon>
        <taxon>Aquificales</taxon>
        <taxon>Aquificaceae</taxon>
        <taxon>Aquifex</taxon>
    </lineage>
</organism>
<keyword id="KW-1185">Reference proteome</keyword>
<keyword id="KW-0687">Ribonucleoprotein</keyword>
<keyword id="KW-0689">Ribosomal protein</keyword>
<feature type="chain" id="PRO_0000157500" description="Large ribosomal subunit protein bL12">
    <location>
        <begin position="1"/>
        <end position="128"/>
    </location>
</feature>
<protein>
    <recommendedName>
        <fullName evidence="1">Large ribosomal subunit protein bL12</fullName>
    </recommendedName>
    <alternativeName>
        <fullName evidence="2">50S ribosomal protein L7/L12</fullName>
    </alternativeName>
</protein>
<reference key="1">
    <citation type="journal article" date="1998" name="Nature">
        <title>The complete genome of the hyperthermophilic bacterium Aquifex aeolicus.</title>
        <authorList>
            <person name="Deckert G."/>
            <person name="Warren P.V."/>
            <person name="Gaasterland T."/>
            <person name="Young W.G."/>
            <person name="Lenox A.L."/>
            <person name="Graham D.E."/>
            <person name="Overbeek R."/>
            <person name="Snead M.A."/>
            <person name="Keller M."/>
            <person name="Aujay M."/>
            <person name="Huber R."/>
            <person name="Feldman R.A."/>
            <person name="Short J.M."/>
            <person name="Olsen G.J."/>
            <person name="Swanson R.V."/>
        </authorList>
    </citation>
    <scope>NUCLEOTIDE SEQUENCE [LARGE SCALE GENOMIC DNA]</scope>
    <source>
        <strain>VF5</strain>
    </source>
</reference>
<accession>P0A466</accession>
<accession>O67761</accession>
<comment type="function">
    <text evidence="1">Forms part of the ribosomal stalk which helps the ribosome interact with GTP-bound translation factors. Is thus essential for accurate translation.</text>
</comment>
<comment type="subunit">
    <text evidence="1">Homodimer. Part of the ribosomal stalk of the 50S ribosomal subunit. Forms a multimeric L10(L12)X complex, where L10 forms an elongated spine to which 2 to 4 L12 dimers bind in a sequential fashion. Binds GTP-bound translation factors.</text>
</comment>
<comment type="similarity">
    <text evidence="1">Belongs to the bacterial ribosomal protein bL12 family.</text>
</comment>